<protein>
    <recommendedName>
        <fullName evidence="1">GTP cyclohydrolase-2</fullName>
        <ecNumber evidence="1">3.5.4.25</ecNumber>
    </recommendedName>
    <alternativeName>
        <fullName evidence="1">GTP cyclohydrolase II</fullName>
    </alternativeName>
</protein>
<keyword id="KW-0342">GTP-binding</keyword>
<keyword id="KW-0378">Hydrolase</keyword>
<keyword id="KW-0479">Metal-binding</keyword>
<keyword id="KW-0547">Nucleotide-binding</keyword>
<keyword id="KW-0686">Riboflavin biosynthesis</keyword>
<keyword id="KW-0862">Zinc</keyword>
<comment type="function">
    <text evidence="1">Catalyzes the conversion of GTP to 2,5-diamino-6-ribosylamino-4(3H)-pyrimidinone 5'-phosphate (DARP), formate and pyrophosphate.</text>
</comment>
<comment type="catalytic activity">
    <reaction evidence="1">
        <text>GTP + 4 H2O = 2,5-diamino-6-hydroxy-4-(5-phosphoribosylamino)-pyrimidine + formate + 2 phosphate + 3 H(+)</text>
        <dbReference type="Rhea" id="RHEA:23704"/>
        <dbReference type="ChEBI" id="CHEBI:15377"/>
        <dbReference type="ChEBI" id="CHEBI:15378"/>
        <dbReference type="ChEBI" id="CHEBI:15740"/>
        <dbReference type="ChEBI" id="CHEBI:37565"/>
        <dbReference type="ChEBI" id="CHEBI:43474"/>
        <dbReference type="ChEBI" id="CHEBI:58614"/>
        <dbReference type="EC" id="3.5.4.25"/>
    </reaction>
</comment>
<comment type="cofactor">
    <cofactor evidence="1">
        <name>Zn(2+)</name>
        <dbReference type="ChEBI" id="CHEBI:29105"/>
    </cofactor>
    <text evidence="1">Binds 1 zinc ion per subunit.</text>
</comment>
<comment type="pathway">
    <text evidence="1">Cofactor biosynthesis; riboflavin biosynthesis; 5-amino-6-(D-ribitylamino)uracil from GTP: step 1/4.</text>
</comment>
<comment type="subunit">
    <text evidence="1">Homodimer.</text>
</comment>
<comment type="similarity">
    <text evidence="1">Belongs to the GTP cyclohydrolase II family.</text>
</comment>
<name>RIBA_SALCH</name>
<evidence type="ECO:0000255" key="1">
    <source>
        <dbReference type="HAMAP-Rule" id="MF_00179"/>
    </source>
</evidence>
<dbReference type="EC" id="3.5.4.25" evidence="1"/>
<dbReference type="EMBL" id="AE017220">
    <property type="protein sequence ID" value="AAX65612.1"/>
    <property type="molecule type" value="Genomic_DNA"/>
</dbReference>
<dbReference type="RefSeq" id="WP_001176284.1">
    <property type="nucleotide sequence ID" value="NC_006905.1"/>
</dbReference>
<dbReference type="SMR" id="Q57NU9"/>
<dbReference type="GeneID" id="66756188"/>
<dbReference type="KEGG" id="sec:SCH_1706"/>
<dbReference type="HOGENOM" id="CLU_020273_2_1_6"/>
<dbReference type="UniPathway" id="UPA00275">
    <property type="reaction ID" value="UER00400"/>
</dbReference>
<dbReference type="Proteomes" id="UP000000538">
    <property type="component" value="Chromosome"/>
</dbReference>
<dbReference type="GO" id="GO:0005829">
    <property type="term" value="C:cytosol"/>
    <property type="evidence" value="ECO:0007669"/>
    <property type="project" value="TreeGrafter"/>
</dbReference>
<dbReference type="GO" id="GO:0005525">
    <property type="term" value="F:GTP binding"/>
    <property type="evidence" value="ECO:0007669"/>
    <property type="project" value="UniProtKB-KW"/>
</dbReference>
<dbReference type="GO" id="GO:0003935">
    <property type="term" value="F:GTP cyclohydrolase II activity"/>
    <property type="evidence" value="ECO:0007669"/>
    <property type="project" value="UniProtKB-UniRule"/>
</dbReference>
<dbReference type="GO" id="GO:0008270">
    <property type="term" value="F:zinc ion binding"/>
    <property type="evidence" value="ECO:0007669"/>
    <property type="project" value="UniProtKB-UniRule"/>
</dbReference>
<dbReference type="GO" id="GO:0009231">
    <property type="term" value="P:riboflavin biosynthetic process"/>
    <property type="evidence" value="ECO:0007669"/>
    <property type="project" value="UniProtKB-UniRule"/>
</dbReference>
<dbReference type="CDD" id="cd00641">
    <property type="entry name" value="GTP_cyclohydro2"/>
    <property type="match status" value="1"/>
</dbReference>
<dbReference type="FunFam" id="3.40.50.10990:FF:000002">
    <property type="entry name" value="GTP cyclohydrolase-2"/>
    <property type="match status" value="1"/>
</dbReference>
<dbReference type="Gene3D" id="3.40.50.10990">
    <property type="entry name" value="GTP cyclohydrolase II"/>
    <property type="match status" value="1"/>
</dbReference>
<dbReference type="HAMAP" id="MF_00179">
    <property type="entry name" value="RibA"/>
    <property type="match status" value="1"/>
</dbReference>
<dbReference type="InterPro" id="IPR032677">
    <property type="entry name" value="GTP_cyclohydro_II"/>
</dbReference>
<dbReference type="InterPro" id="IPR000926">
    <property type="entry name" value="RibA"/>
</dbReference>
<dbReference type="InterPro" id="IPR036144">
    <property type="entry name" value="RibA-like_sf"/>
</dbReference>
<dbReference type="NCBIfam" id="NF001591">
    <property type="entry name" value="PRK00393.1"/>
    <property type="match status" value="1"/>
</dbReference>
<dbReference type="NCBIfam" id="TIGR00505">
    <property type="entry name" value="ribA"/>
    <property type="match status" value="1"/>
</dbReference>
<dbReference type="PANTHER" id="PTHR21327:SF18">
    <property type="entry name" value="3,4-DIHYDROXY-2-BUTANONE 4-PHOSPHATE SYNTHASE"/>
    <property type="match status" value="1"/>
</dbReference>
<dbReference type="PANTHER" id="PTHR21327">
    <property type="entry name" value="GTP CYCLOHYDROLASE II-RELATED"/>
    <property type="match status" value="1"/>
</dbReference>
<dbReference type="Pfam" id="PF00925">
    <property type="entry name" value="GTP_cyclohydro2"/>
    <property type="match status" value="1"/>
</dbReference>
<dbReference type="SUPFAM" id="SSF142695">
    <property type="entry name" value="RibA-like"/>
    <property type="match status" value="1"/>
</dbReference>
<sequence length="196" mass="21635">MQLKRVAEAKLPTPLGDFLMVGFEELATGHDHAALVFGDISGKTPVLARVHSECLTGDALFSLRCDCGFQLEAALTHIAEEGRGILIYHRQEGRNIGLLNKIRAYALQDQGYDTVEANHQLGFAADERDFTLCADMFKLLGVDEVRLLTNNPKKVEILTEAGINIVERVPLIVGRNPNNEHYLDTKAAKMGHLLSK</sequence>
<gene>
    <name evidence="1" type="primary">ribA</name>
    <name type="ordered locus">SCH_1706</name>
</gene>
<accession>Q57NU9</accession>
<feature type="chain" id="PRO_0000151771" description="GTP cyclohydrolase-2">
    <location>
        <begin position="1"/>
        <end position="196"/>
    </location>
</feature>
<feature type="active site" description="Proton acceptor" evidence="1">
    <location>
        <position position="126"/>
    </location>
</feature>
<feature type="active site" description="Nucleophile" evidence="1">
    <location>
        <position position="128"/>
    </location>
</feature>
<feature type="binding site" evidence="1">
    <location>
        <begin position="49"/>
        <end position="53"/>
    </location>
    <ligand>
        <name>GTP</name>
        <dbReference type="ChEBI" id="CHEBI:37565"/>
    </ligand>
</feature>
<feature type="binding site" evidence="1">
    <location>
        <position position="54"/>
    </location>
    <ligand>
        <name>Zn(2+)</name>
        <dbReference type="ChEBI" id="CHEBI:29105"/>
        <note>catalytic</note>
    </ligand>
</feature>
<feature type="binding site" evidence="1">
    <location>
        <position position="65"/>
    </location>
    <ligand>
        <name>Zn(2+)</name>
        <dbReference type="ChEBI" id="CHEBI:29105"/>
        <note>catalytic</note>
    </ligand>
</feature>
<feature type="binding site" evidence="1">
    <location>
        <position position="67"/>
    </location>
    <ligand>
        <name>Zn(2+)</name>
        <dbReference type="ChEBI" id="CHEBI:29105"/>
        <note>catalytic</note>
    </ligand>
</feature>
<feature type="binding site" evidence="1">
    <location>
        <position position="70"/>
    </location>
    <ligand>
        <name>GTP</name>
        <dbReference type="ChEBI" id="CHEBI:37565"/>
    </ligand>
</feature>
<feature type="binding site" evidence="1">
    <location>
        <begin position="92"/>
        <end position="94"/>
    </location>
    <ligand>
        <name>GTP</name>
        <dbReference type="ChEBI" id="CHEBI:37565"/>
    </ligand>
</feature>
<feature type="binding site" evidence="1">
    <location>
        <position position="114"/>
    </location>
    <ligand>
        <name>GTP</name>
        <dbReference type="ChEBI" id="CHEBI:37565"/>
    </ligand>
</feature>
<feature type="binding site" evidence="1">
    <location>
        <position position="149"/>
    </location>
    <ligand>
        <name>GTP</name>
        <dbReference type="ChEBI" id="CHEBI:37565"/>
    </ligand>
</feature>
<feature type="binding site" evidence="1">
    <location>
        <position position="154"/>
    </location>
    <ligand>
        <name>GTP</name>
        <dbReference type="ChEBI" id="CHEBI:37565"/>
    </ligand>
</feature>
<proteinExistence type="inferred from homology"/>
<reference key="1">
    <citation type="journal article" date="2005" name="Nucleic Acids Res.">
        <title>The genome sequence of Salmonella enterica serovar Choleraesuis, a highly invasive and resistant zoonotic pathogen.</title>
        <authorList>
            <person name="Chiu C.-H."/>
            <person name="Tang P."/>
            <person name="Chu C."/>
            <person name="Hu S."/>
            <person name="Bao Q."/>
            <person name="Yu J."/>
            <person name="Chou Y.-Y."/>
            <person name="Wang H.-S."/>
            <person name="Lee Y.-S."/>
        </authorList>
    </citation>
    <scope>NUCLEOTIDE SEQUENCE [LARGE SCALE GENOMIC DNA]</scope>
    <source>
        <strain>SC-B67</strain>
    </source>
</reference>
<organism>
    <name type="scientific">Salmonella choleraesuis (strain SC-B67)</name>
    <dbReference type="NCBI Taxonomy" id="321314"/>
    <lineage>
        <taxon>Bacteria</taxon>
        <taxon>Pseudomonadati</taxon>
        <taxon>Pseudomonadota</taxon>
        <taxon>Gammaproteobacteria</taxon>
        <taxon>Enterobacterales</taxon>
        <taxon>Enterobacteriaceae</taxon>
        <taxon>Salmonella</taxon>
    </lineage>
</organism>